<feature type="chain" id="PRO_0000377773" description="Putative ubiquitin thioesterase 232R">
    <location>
        <begin position="1"/>
        <end position="844"/>
    </location>
</feature>
<feature type="domain" description="OTU" evidence="4">
    <location>
        <begin position="590"/>
        <end position="725"/>
    </location>
</feature>
<feature type="region of interest" description="Disordered" evidence="5">
    <location>
        <begin position="136"/>
        <end position="223"/>
    </location>
</feature>
<feature type="region of interest" description="Disordered" evidence="5">
    <location>
        <begin position="261"/>
        <end position="287"/>
    </location>
</feature>
<feature type="region of interest" description="Disordered" evidence="5">
    <location>
        <begin position="326"/>
        <end position="377"/>
    </location>
</feature>
<feature type="region of interest" description="Disordered" evidence="5">
    <location>
        <begin position="422"/>
        <end position="541"/>
    </location>
</feature>
<feature type="compositionally biased region" description="Low complexity" evidence="5">
    <location>
        <begin position="137"/>
        <end position="216"/>
    </location>
</feature>
<feature type="compositionally biased region" description="Low complexity" evidence="5">
    <location>
        <begin position="332"/>
        <end position="341"/>
    </location>
</feature>
<feature type="compositionally biased region" description="Low complexity" evidence="5">
    <location>
        <begin position="354"/>
        <end position="364"/>
    </location>
</feature>
<feature type="compositionally biased region" description="Pro residues" evidence="5">
    <location>
        <begin position="429"/>
        <end position="438"/>
    </location>
</feature>
<feature type="compositionally biased region" description="Basic and acidic residues" evidence="5">
    <location>
        <begin position="472"/>
        <end position="485"/>
    </location>
</feature>
<feature type="compositionally biased region" description="Low complexity" evidence="5">
    <location>
        <begin position="504"/>
        <end position="518"/>
    </location>
</feature>
<feature type="compositionally biased region" description="Basic and acidic residues" evidence="5">
    <location>
        <begin position="526"/>
        <end position="535"/>
    </location>
</feature>
<feature type="active site" evidence="3">
    <location>
        <position position="598"/>
    </location>
</feature>
<feature type="active site" description="Nucleophile" evidence="2">
    <location>
        <position position="601"/>
    </location>
</feature>
<feature type="active site" evidence="2">
    <location>
        <position position="718"/>
    </location>
</feature>
<keyword id="KW-0378">Hydrolase</keyword>
<keyword id="KW-0645">Protease</keyword>
<keyword id="KW-1185">Reference proteome</keyword>
<keyword id="KW-0788">Thiol protease</keyword>
<keyword id="KW-0833">Ubl conjugation pathway</keyword>
<protein>
    <recommendedName>
        <fullName>Putative ubiquitin thioesterase 232R</fullName>
        <ecNumber evidence="2">3.4.19.12</ecNumber>
    </recommendedName>
</protein>
<organismHost>
    <name type="scientific">Aedes vexans</name>
    <name type="common">Inland floodwater mosquito</name>
    <name type="synonym">Culex vexans</name>
    <dbReference type="NCBI Taxonomy" id="7163"/>
</organismHost>
<organismHost>
    <name type="scientific">Culex territans</name>
    <dbReference type="NCBI Taxonomy" id="42431"/>
</organismHost>
<organismHost>
    <name type="scientific">Culiseta annulata</name>
    <dbReference type="NCBI Taxonomy" id="332058"/>
</organismHost>
<organismHost>
    <name type="scientific">Ochlerotatus sollicitans</name>
    <name type="common">eastern saltmarsh mosquito</name>
    <dbReference type="NCBI Taxonomy" id="310513"/>
</organismHost>
<organismHost>
    <name type="scientific">Ochlerotatus taeniorhynchus</name>
    <name type="common">Black salt marsh mosquito</name>
    <name type="synonym">Aedes taeniorhynchus</name>
    <dbReference type="NCBI Taxonomy" id="329105"/>
</organismHost>
<organismHost>
    <name type="scientific">Psorophora ferox</name>
    <dbReference type="NCBI Taxonomy" id="7183"/>
</organismHost>
<accession>Q196X6</accession>
<sequence length="844" mass="93521">MCDVDLKTCQKSSKFKKKDIVELGKQCGVNPYLSNGKEKSRTVICTEIVASYNPPPGSSQGDDSEHESISQVNNIPNRNEKFLPKSKYPTYTQVLNMEKRQLKALAKKLGLEYKKQTEQQLQGAINLKIKTLEGLNSSTRSRSPSVRSRCRSPSPRAPSVRSRLPSTRSRCRSPSPRAPSTRSRSPSVRSRCRSPSPRAPSVRSRSPSRQSVRQSSESADEAEQVALETMKTAHLRMLATTLGASTVTGMKKKDLIDYIKSRRKSPSPSPVPPSTRCDPTTTAPPMEDLFKKKVDELKTMAKNAGFVRWNGKTLSKMNKSDLVDFLLNGMNRPSPSLPQSRSRTRSPPPPPRSRSPSVGSPSVRDGGAGRRRLPELTRAQLTAMKVVDLKAMATELGLTRYRGMNRTQMRKGDVINFIIETQKKQKTPSPSPTPPSPVPSVVGSRRPKSPLPYKSRDFVALADDDSEPGVEVQKKMGKSGEREPKSVPNVRIIPSEIPAPTEGSLRSRLSTQQQTQQSVVYEDPNESIKPEESVRAPKLSVVDPQLSRKTLKPLPSLVVTDQPSKQPELPKYKGRTPYTDLEQLAQSKGYTVKQVSGDGNCLFRSVCKSIRALRGEKFTHRQLRQMVVDYLRENPEFLQVYLEYVARQRDNSLPSTEQYLSEMSKCGTWGDLICLKTLSEILKVQFNLLILNTKQFQMVSSQDDYPDVIPLGYIDNYHYTSLVPIGLDSKGGAASSTTTGLKQLDGPRPPITLIPESQVPAVAATISTQQPPSIVAPPISVGGSQLVPSIVPQPQMPKPDFKPVKPLSNLNELLDLMDRVKPQVYNDISQLEKARQSIKVSLGL</sequence>
<proteinExistence type="inferred from homology"/>
<dbReference type="EC" id="3.4.19.12" evidence="2"/>
<dbReference type="EMBL" id="DQ643392">
    <property type="protein sequence ID" value="ABF82114.1"/>
    <property type="molecule type" value="Genomic_DNA"/>
</dbReference>
<dbReference type="RefSeq" id="YP_654656.1">
    <property type="nucleotide sequence ID" value="NC_008187.1"/>
</dbReference>
<dbReference type="SMR" id="Q196X6"/>
<dbReference type="KEGG" id="vg:4156295"/>
<dbReference type="OrthoDB" id="17526at10239"/>
<dbReference type="Proteomes" id="UP000001358">
    <property type="component" value="Genome"/>
</dbReference>
<dbReference type="GO" id="GO:0004843">
    <property type="term" value="F:cysteine-type deubiquitinase activity"/>
    <property type="evidence" value="ECO:0007669"/>
    <property type="project" value="UniProtKB-EC"/>
</dbReference>
<dbReference type="GO" id="GO:0006353">
    <property type="term" value="P:DNA-templated transcription termination"/>
    <property type="evidence" value="ECO:0007669"/>
    <property type="project" value="InterPro"/>
</dbReference>
<dbReference type="GO" id="GO:0016579">
    <property type="term" value="P:protein deubiquitination"/>
    <property type="evidence" value="ECO:0007669"/>
    <property type="project" value="TreeGrafter"/>
</dbReference>
<dbReference type="GO" id="GO:0006508">
    <property type="term" value="P:proteolysis"/>
    <property type="evidence" value="ECO:0007669"/>
    <property type="project" value="UniProtKB-KW"/>
</dbReference>
<dbReference type="CDD" id="cd22758">
    <property type="entry name" value="OTU_232R-like"/>
    <property type="match status" value="1"/>
</dbReference>
<dbReference type="Gene3D" id="3.90.70.80">
    <property type="match status" value="1"/>
</dbReference>
<dbReference type="InterPro" id="IPR003323">
    <property type="entry name" value="OTU_dom"/>
</dbReference>
<dbReference type="InterPro" id="IPR038765">
    <property type="entry name" value="Papain-like_cys_pep_sf"/>
</dbReference>
<dbReference type="InterPro" id="IPR050704">
    <property type="entry name" value="Peptidase_C85-like"/>
</dbReference>
<dbReference type="InterPro" id="IPR011112">
    <property type="entry name" value="Rho-like_N"/>
</dbReference>
<dbReference type="PANTHER" id="PTHR12419">
    <property type="entry name" value="OTU DOMAIN CONTAINING PROTEIN"/>
    <property type="match status" value="1"/>
</dbReference>
<dbReference type="PANTHER" id="PTHR12419:SF11">
    <property type="entry name" value="OTU DOMAIN-CONTAINING PROTEIN DDB_G0284757"/>
    <property type="match status" value="1"/>
</dbReference>
<dbReference type="Pfam" id="PF02338">
    <property type="entry name" value="OTU"/>
    <property type="match status" value="1"/>
</dbReference>
<dbReference type="Pfam" id="PF07498">
    <property type="entry name" value="Rho_N"/>
    <property type="match status" value="1"/>
</dbReference>
<dbReference type="SMART" id="SM00959">
    <property type="entry name" value="Rho_N"/>
    <property type="match status" value="3"/>
</dbReference>
<dbReference type="SUPFAM" id="SSF54001">
    <property type="entry name" value="Cysteine proteinases"/>
    <property type="match status" value="1"/>
</dbReference>
<dbReference type="PROSITE" id="PS50802">
    <property type="entry name" value="OTU"/>
    <property type="match status" value="1"/>
</dbReference>
<evidence type="ECO:0000250" key="1"/>
<evidence type="ECO:0000250" key="2">
    <source>
        <dbReference type="UniProtKB" id="Q5VVQ6"/>
    </source>
</evidence>
<evidence type="ECO:0000250" key="3">
    <source>
        <dbReference type="UniProtKB" id="Q96FW1"/>
    </source>
</evidence>
<evidence type="ECO:0000255" key="4">
    <source>
        <dbReference type="PROSITE-ProRule" id="PRU00139"/>
    </source>
</evidence>
<evidence type="ECO:0000256" key="5">
    <source>
        <dbReference type="SAM" id="MobiDB-lite"/>
    </source>
</evidence>
<gene>
    <name type="ORF">IIV3-084L</name>
</gene>
<name>VF232_IIV3</name>
<organism>
    <name type="scientific">Invertebrate iridescent virus 3</name>
    <name type="common">IIV-3</name>
    <name type="synonym">Mosquito iridescent virus</name>
    <dbReference type="NCBI Taxonomy" id="345201"/>
    <lineage>
        <taxon>Viruses</taxon>
        <taxon>Varidnaviria</taxon>
        <taxon>Bamfordvirae</taxon>
        <taxon>Nucleocytoviricota</taxon>
        <taxon>Megaviricetes</taxon>
        <taxon>Pimascovirales</taxon>
        <taxon>Iridoviridae</taxon>
        <taxon>Betairidovirinae</taxon>
        <taxon>Chloriridovirus</taxon>
    </lineage>
</organism>
<reference key="1">
    <citation type="journal article" date="2006" name="J. Virol.">
        <title>Genome of invertebrate iridescent virus type 3 (mosquito iridescent virus).</title>
        <authorList>
            <person name="Delhon G."/>
            <person name="Tulman E.R."/>
            <person name="Afonso C.L."/>
            <person name="Lu Z."/>
            <person name="Becnel J.J."/>
            <person name="Moser B.A."/>
            <person name="Kutish G.F."/>
            <person name="Rock D.L."/>
        </authorList>
    </citation>
    <scope>NUCLEOTIDE SEQUENCE [LARGE SCALE GENOMIC DNA]</scope>
</reference>
<comment type="function">
    <text evidence="1">Hydrolase that can remove conjugated ubiquitin from proteins and may therefore play an important regulatory role at the level of protein turnover by preventing degradation.</text>
</comment>
<comment type="catalytic activity">
    <reaction evidence="2">
        <text>Thiol-dependent hydrolysis of ester, thioester, amide, peptide and isopeptide bonds formed by the C-terminal Gly of ubiquitin (a 76-residue protein attached to proteins as an intracellular targeting signal).</text>
        <dbReference type="EC" id="3.4.19.12"/>
    </reaction>
</comment>